<accession>Q9LQU5</accession>
<evidence type="ECO:0000250" key="1"/>
<evidence type="ECO:0000255" key="2"/>
<evidence type="ECO:0000255" key="3">
    <source>
        <dbReference type="PROSITE-ProRule" id="PRU00794"/>
    </source>
</evidence>
<evidence type="ECO:0000269" key="4">
    <source>
    </source>
</evidence>
<evidence type="ECO:0000305" key="5"/>
<name>NUD18_ARATH</name>
<comment type="function">
    <text evidence="1">Probably mediates the hydrolysis of some nucleoside diphosphate derivatives.</text>
</comment>
<comment type="cofactor">
    <cofactor evidence="1">
        <name>Mg(2+)</name>
        <dbReference type="ChEBI" id="CHEBI:18420"/>
    </cofactor>
    <cofactor evidence="1">
        <name>Mn(2+)</name>
        <dbReference type="ChEBI" id="CHEBI:29035"/>
    </cofactor>
</comment>
<comment type="subcellular location">
    <subcellularLocation>
        <location evidence="5">Mitochondrion</location>
    </subcellularLocation>
</comment>
<comment type="tissue specificity">
    <text evidence="4">Expressed in roots, stems and inflorescences.</text>
</comment>
<comment type="similarity">
    <text evidence="5">Belongs to the Nudix hydrolase family.</text>
</comment>
<reference key="1">
    <citation type="journal article" date="2000" name="Nature">
        <title>Sequence and analysis of chromosome 1 of the plant Arabidopsis thaliana.</title>
        <authorList>
            <person name="Theologis A."/>
            <person name="Ecker J.R."/>
            <person name="Palm C.J."/>
            <person name="Federspiel N.A."/>
            <person name="Kaul S."/>
            <person name="White O."/>
            <person name="Alonso J."/>
            <person name="Altafi H."/>
            <person name="Araujo R."/>
            <person name="Bowman C.L."/>
            <person name="Brooks S.Y."/>
            <person name="Buehler E."/>
            <person name="Chan A."/>
            <person name="Chao Q."/>
            <person name="Chen H."/>
            <person name="Cheuk R.F."/>
            <person name="Chin C.W."/>
            <person name="Chung M.K."/>
            <person name="Conn L."/>
            <person name="Conway A.B."/>
            <person name="Conway A.R."/>
            <person name="Creasy T.H."/>
            <person name="Dewar K."/>
            <person name="Dunn P."/>
            <person name="Etgu P."/>
            <person name="Feldblyum T.V."/>
            <person name="Feng J.-D."/>
            <person name="Fong B."/>
            <person name="Fujii C.Y."/>
            <person name="Gill J.E."/>
            <person name="Goldsmith A.D."/>
            <person name="Haas B."/>
            <person name="Hansen N.F."/>
            <person name="Hughes B."/>
            <person name="Huizar L."/>
            <person name="Hunter J.L."/>
            <person name="Jenkins J."/>
            <person name="Johnson-Hopson C."/>
            <person name="Khan S."/>
            <person name="Khaykin E."/>
            <person name="Kim C.J."/>
            <person name="Koo H.L."/>
            <person name="Kremenetskaia I."/>
            <person name="Kurtz D.B."/>
            <person name="Kwan A."/>
            <person name="Lam B."/>
            <person name="Langin-Hooper S."/>
            <person name="Lee A."/>
            <person name="Lee J.M."/>
            <person name="Lenz C.A."/>
            <person name="Li J.H."/>
            <person name="Li Y.-P."/>
            <person name="Lin X."/>
            <person name="Liu S.X."/>
            <person name="Liu Z.A."/>
            <person name="Luros J.S."/>
            <person name="Maiti R."/>
            <person name="Marziali A."/>
            <person name="Militscher J."/>
            <person name="Miranda M."/>
            <person name="Nguyen M."/>
            <person name="Nierman W.C."/>
            <person name="Osborne B.I."/>
            <person name="Pai G."/>
            <person name="Peterson J."/>
            <person name="Pham P.K."/>
            <person name="Rizzo M."/>
            <person name="Rooney T."/>
            <person name="Rowley D."/>
            <person name="Sakano H."/>
            <person name="Salzberg S.L."/>
            <person name="Schwartz J.R."/>
            <person name="Shinn P."/>
            <person name="Southwick A.M."/>
            <person name="Sun H."/>
            <person name="Tallon L.J."/>
            <person name="Tambunga G."/>
            <person name="Toriumi M.J."/>
            <person name="Town C.D."/>
            <person name="Utterback T."/>
            <person name="Van Aken S."/>
            <person name="Vaysberg M."/>
            <person name="Vysotskaia V.S."/>
            <person name="Walker M."/>
            <person name="Wu D."/>
            <person name="Yu G."/>
            <person name="Fraser C.M."/>
            <person name="Venter J.C."/>
            <person name="Davis R.W."/>
        </authorList>
    </citation>
    <scope>NUCLEOTIDE SEQUENCE [LARGE SCALE GENOMIC DNA]</scope>
    <source>
        <strain>cv. Columbia</strain>
    </source>
</reference>
<reference key="2">
    <citation type="journal article" date="2017" name="Plant J.">
        <title>Araport11: a complete reannotation of the Arabidopsis thaliana reference genome.</title>
        <authorList>
            <person name="Cheng C.Y."/>
            <person name="Krishnakumar V."/>
            <person name="Chan A.P."/>
            <person name="Thibaud-Nissen F."/>
            <person name="Schobel S."/>
            <person name="Town C.D."/>
        </authorList>
    </citation>
    <scope>GENOME REANNOTATION</scope>
    <source>
        <strain>cv. Columbia</strain>
    </source>
</reference>
<reference key="3">
    <citation type="journal article" date="2002" name="Science">
        <title>Functional annotation of a full-length Arabidopsis cDNA collection.</title>
        <authorList>
            <person name="Seki M."/>
            <person name="Narusaka M."/>
            <person name="Kamiya A."/>
            <person name="Ishida J."/>
            <person name="Satou M."/>
            <person name="Sakurai T."/>
            <person name="Nakajima M."/>
            <person name="Enju A."/>
            <person name="Akiyama K."/>
            <person name="Oono Y."/>
            <person name="Muramatsu M."/>
            <person name="Hayashizaki Y."/>
            <person name="Kawai J."/>
            <person name="Carninci P."/>
            <person name="Itoh M."/>
            <person name="Ishii Y."/>
            <person name="Arakawa T."/>
            <person name="Shibata K."/>
            <person name="Shinagawa A."/>
            <person name="Shinozaki K."/>
        </authorList>
    </citation>
    <scope>NUCLEOTIDE SEQUENCE [LARGE SCALE MRNA]</scope>
    <source>
        <strain>cv. Columbia</strain>
    </source>
</reference>
<reference key="4">
    <citation type="journal article" date="2003" name="Science">
        <title>Empirical analysis of transcriptional activity in the Arabidopsis genome.</title>
        <authorList>
            <person name="Yamada K."/>
            <person name="Lim J."/>
            <person name="Dale J.M."/>
            <person name="Chen H."/>
            <person name="Shinn P."/>
            <person name="Palm C.J."/>
            <person name="Southwick A.M."/>
            <person name="Wu H.C."/>
            <person name="Kim C.J."/>
            <person name="Nguyen M."/>
            <person name="Pham P.K."/>
            <person name="Cheuk R.F."/>
            <person name="Karlin-Newmann G."/>
            <person name="Liu S.X."/>
            <person name="Lam B."/>
            <person name="Sakano H."/>
            <person name="Wu T."/>
            <person name="Yu G."/>
            <person name="Miranda M."/>
            <person name="Quach H.L."/>
            <person name="Tripp M."/>
            <person name="Chang C.H."/>
            <person name="Lee J.M."/>
            <person name="Toriumi M.J."/>
            <person name="Chan M.M."/>
            <person name="Tang C.C."/>
            <person name="Onodera C.S."/>
            <person name="Deng J.M."/>
            <person name="Akiyama K."/>
            <person name="Ansari Y."/>
            <person name="Arakawa T."/>
            <person name="Banh J."/>
            <person name="Banno F."/>
            <person name="Bowser L."/>
            <person name="Brooks S.Y."/>
            <person name="Carninci P."/>
            <person name="Chao Q."/>
            <person name="Choy N."/>
            <person name="Enju A."/>
            <person name="Goldsmith A.D."/>
            <person name="Gurjal M."/>
            <person name="Hansen N.F."/>
            <person name="Hayashizaki Y."/>
            <person name="Johnson-Hopson C."/>
            <person name="Hsuan V.W."/>
            <person name="Iida K."/>
            <person name="Karnes M."/>
            <person name="Khan S."/>
            <person name="Koesema E."/>
            <person name="Ishida J."/>
            <person name="Jiang P.X."/>
            <person name="Jones T."/>
            <person name="Kawai J."/>
            <person name="Kamiya A."/>
            <person name="Meyers C."/>
            <person name="Nakajima M."/>
            <person name="Narusaka M."/>
            <person name="Seki M."/>
            <person name="Sakurai T."/>
            <person name="Satou M."/>
            <person name="Tamse R."/>
            <person name="Vaysberg M."/>
            <person name="Wallender E.K."/>
            <person name="Wong C."/>
            <person name="Yamamura Y."/>
            <person name="Yuan S."/>
            <person name="Shinozaki K."/>
            <person name="Davis R.W."/>
            <person name="Theologis A."/>
            <person name="Ecker J.R."/>
        </authorList>
    </citation>
    <scope>NUCLEOTIDE SEQUENCE [LARGE SCALE MRNA]</scope>
    <source>
        <strain>cv. Columbia</strain>
    </source>
</reference>
<reference key="5">
    <citation type="journal article" date="2005" name="J. Biol. Chem.">
        <title>Comprehensive analysis of cytosolic nudix hydrolases in Arabidopsis thaliana.</title>
        <authorList>
            <person name="Ogawa T."/>
            <person name="Ueda Y."/>
            <person name="Yoshimura K."/>
            <person name="Shigeoka S."/>
        </authorList>
    </citation>
    <scope>NOMENCLATURE</scope>
</reference>
<reference key="6">
    <citation type="journal article" date="2008" name="Plant Physiol.">
        <title>Molecular characterization of organelle-type Nudix hydrolases in Arabidopsis.</title>
        <authorList>
            <person name="Ogawa T."/>
            <person name="Yoshimura K."/>
            <person name="Miyake H."/>
            <person name="Ishikawa K."/>
            <person name="Ito D."/>
            <person name="Tanabe N."/>
            <person name="Shigeoka S."/>
        </authorList>
    </citation>
    <scope>TISSUE SPECIFICITY</scope>
</reference>
<keyword id="KW-0378">Hydrolase</keyword>
<keyword id="KW-0460">Magnesium</keyword>
<keyword id="KW-0464">Manganese</keyword>
<keyword id="KW-0479">Metal-binding</keyword>
<keyword id="KW-0496">Mitochondrion</keyword>
<keyword id="KW-1185">Reference proteome</keyword>
<keyword id="KW-0809">Transit peptide</keyword>
<protein>
    <recommendedName>
        <fullName>Nudix hydrolase 18, mitochondrial</fullName>
        <shortName>AtNUDT18</shortName>
        <ecNumber>3.6.1.-</ecNumber>
    </recommendedName>
</protein>
<dbReference type="EC" id="3.6.1.-"/>
<dbReference type="EMBL" id="AC006917">
    <property type="protein sequence ID" value="AAF79225.1"/>
    <property type="molecule type" value="Genomic_DNA"/>
</dbReference>
<dbReference type="EMBL" id="CP002684">
    <property type="protein sequence ID" value="AEE29236.1"/>
    <property type="molecule type" value="Genomic_DNA"/>
</dbReference>
<dbReference type="EMBL" id="AK117453">
    <property type="protein sequence ID" value="BAC42118.1"/>
    <property type="molecule type" value="mRNA"/>
</dbReference>
<dbReference type="EMBL" id="BT005432">
    <property type="protein sequence ID" value="AAO63852.1"/>
    <property type="molecule type" value="mRNA"/>
</dbReference>
<dbReference type="PIR" id="D86282">
    <property type="entry name" value="D86282"/>
</dbReference>
<dbReference type="RefSeq" id="NP_172939.1">
    <property type="nucleotide sequence ID" value="NM_101355.3"/>
</dbReference>
<dbReference type="SMR" id="Q9LQU5"/>
<dbReference type="FunCoup" id="Q9LQU5">
    <property type="interactions" value="1720"/>
</dbReference>
<dbReference type="STRING" id="3702.Q9LQU5"/>
<dbReference type="PaxDb" id="3702-AT1G14860.1"/>
<dbReference type="ProteomicsDB" id="250587"/>
<dbReference type="EnsemblPlants" id="AT1G14860.1">
    <property type="protein sequence ID" value="AT1G14860.1"/>
    <property type="gene ID" value="AT1G14860"/>
</dbReference>
<dbReference type="GeneID" id="838051"/>
<dbReference type="Gramene" id="AT1G14860.1">
    <property type="protein sequence ID" value="AT1G14860.1"/>
    <property type="gene ID" value="AT1G14860"/>
</dbReference>
<dbReference type="KEGG" id="ath:AT1G14860"/>
<dbReference type="Araport" id="AT1G14860"/>
<dbReference type="TAIR" id="AT1G14860">
    <property type="gene designation" value="NUDT18"/>
</dbReference>
<dbReference type="eggNOG" id="KOG2839">
    <property type="taxonomic scope" value="Eukaryota"/>
</dbReference>
<dbReference type="HOGENOM" id="CLU_037162_5_2_1"/>
<dbReference type="InParanoid" id="Q9LQU5"/>
<dbReference type="OMA" id="SQRYNKG"/>
<dbReference type="PhylomeDB" id="Q9LQU5"/>
<dbReference type="BioCyc" id="ARA:AT1G14860-MONOMER"/>
<dbReference type="PRO" id="PR:Q9LQU5"/>
<dbReference type="Proteomes" id="UP000006548">
    <property type="component" value="Chromosome 1"/>
</dbReference>
<dbReference type="ExpressionAtlas" id="Q9LQU5">
    <property type="expression patterns" value="baseline and differential"/>
</dbReference>
<dbReference type="GO" id="GO:0005739">
    <property type="term" value="C:mitochondrion"/>
    <property type="evidence" value="ECO:0007669"/>
    <property type="project" value="UniProtKB-SubCell"/>
</dbReference>
<dbReference type="GO" id="GO:0046872">
    <property type="term" value="F:metal ion binding"/>
    <property type="evidence" value="ECO:0007669"/>
    <property type="project" value="UniProtKB-KW"/>
</dbReference>
<dbReference type="GO" id="GO:0016462">
    <property type="term" value="F:pyrophosphatase activity"/>
    <property type="evidence" value="ECO:0007669"/>
    <property type="project" value="InterPro"/>
</dbReference>
<dbReference type="CDD" id="cd04666">
    <property type="entry name" value="NUDIX_DIPP2_like_Nudt4"/>
    <property type="match status" value="1"/>
</dbReference>
<dbReference type="FunFam" id="3.90.79.10:FF:000022">
    <property type="entry name" value="Nudix hydrolase 17, mitochondrial"/>
    <property type="match status" value="1"/>
</dbReference>
<dbReference type="Gene3D" id="3.90.79.10">
    <property type="entry name" value="Nucleoside Triphosphate Pyrophosphohydrolase"/>
    <property type="match status" value="1"/>
</dbReference>
<dbReference type="InterPro" id="IPR047198">
    <property type="entry name" value="DDP-like_NUDIX"/>
</dbReference>
<dbReference type="InterPro" id="IPR015797">
    <property type="entry name" value="NUDIX_hydrolase-like_dom_sf"/>
</dbReference>
<dbReference type="InterPro" id="IPR020084">
    <property type="entry name" value="NUDIX_hydrolase_CS"/>
</dbReference>
<dbReference type="InterPro" id="IPR000086">
    <property type="entry name" value="NUDIX_hydrolase_dom"/>
</dbReference>
<dbReference type="PANTHER" id="PTHR12629">
    <property type="entry name" value="DIPHOSPHOINOSITOL POLYPHOSPHATE PHOSPHOHYDROLASE"/>
    <property type="match status" value="1"/>
</dbReference>
<dbReference type="PANTHER" id="PTHR12629:SF68">
    <property type="entry name" value="NUDIX HYDROLASE 18, MITOCHONDRIAL"/>
    <property type="match status" value="1"/>
</dbReference>
<dbReference type="Pfam" id="PF00293">
    <property type="entry name" value="NUDIX"/>
    <property type="match status" value="1"/>
</dbReference>
<dbReference type="SUPFAM" id="SSF55811">
    <property type="entry name" value="Nudix"/>
    <property type="match status" value="1"/>
</dbReference>
<dbReference type="PROSITE" id="PS51462">
    <property type="entry name" value="NUDIX"/>
    <property type="match status" value="1"/>
</dbReference>
<dbReference type="PROSITE" id="PS00893">
    <property type="entry name" value="NUDIX_BOX"/>
    <property type="match status" value="1"/>
</dbReference>
<gene>
    <name type="primary">NUDT18</name>
    <name type="synonym">NUDX18</name>
    <name type="ordered locus">At1g14860</name>
    <name type="ORF">F10B6.26</name>
</gene>
<feature type="transit peptide" description="Mitochondrion" evidence="2">
    <location>
        <begin position="1"/>
        <end position="21"/>
    </location>
</feature>
<feature type="chain" id="PRO_0000019961" description="Nudix hydrolase 18, mitochondrial">
    <location>
        <begin position="22"/>
        <end position="176"/>
    </location>
</feature>
<feature type="domain" description="Nudix hydrolase" evidence="3">
    <location>
        <begin position="22"/>
        <end position="153"/>
    </location>
</feature>
<feature type="short sequence motif" description="Nudix box">
    <location>
        <begin position="60"/>
        <end position="81"/>
    </location>
</feature>
<feature type="binding site" evidence="1">
    <location>
        <position position="75"/>
    </location>
    <ligand>
        <name>Mg(2+)</name>
        <dbReference type="ChEBI" id="CHEBI:18420"/>
    </ligand>
</feature>
<feature type="binding site" evidence="1">
    <location>
        <position position="79"/>
    </location>
    <ligand>
        <name>Mg(2+)</name>
        <dbReference type="ChEBI" id="CHEBI:18420"/>
    </ligand>
</feature>
<organism>
    <name type="scientific">Arabidopsis thaliana</name>
    <name type="common">Mouse-ear cress</name>
    <dbReference type="NCBI Taxonomy" id="3702"/>
    <lineage>
        <taxon>Eukaryota</taxon>
        <taxon>Viridiplantae</taxon>
        <taxon>Streptophyta</taxon>
        <taxon>Embryophyta</taxon>
        <taxon>Tracheophyta</taxon>
        <taxon>Spermatophyta</taxon>
        <taxon>Magnoliopsida</taxon>
        <taxon>eudicotyledons</taxon>
        <taxon>Gunneridae</taxon>
        <taxon>Pentapetalae</taxon>
        <taxon>rosids</taxon>
        <taxon>malvids</taxon>
        <taxon>Brassicales</taxon>
        <taxon>Brassicaceae</taxon>
        <taxon>Camelineae</taxon>
        <taxon>Arabidopsis</taxon>
    </lineage>
</organism>
<proteinExistence type="evidence at transcript level"/>
<sequence length="176" mass="20416">MVCLVSRTGRQSQRYNKGRRQVVGCIPYRLKISSDGTISDEFEVLVISSQKGHALMFPKGGWELDESVEEAASRESLEEAGVVGNVERQLGKWDFLSKSKGTFYEGFMFPMLVKEELELWPEQHLRQRIWMKVDEARDACRDWWMKEALDVLVQRLSLLSLKPMEEDENLPLISIY</sequence>